<reference key="1">
    <citation type="journal article" date="2007" name="PLoS ONE">
        <title>Genome sequencing shows that European isolates of Francisella tularensis subspecies tularensis are almost identical to US laboratory strain Schu S4.</title>
        <authorList>
            <person name="Chaudhuri R.R."/>
            <person name="Ren C.-P."/>
            <person name="Desmond L."/>
            <person name="Vincent G.A."/>
            <person name="Silman N.J."/>
            <person name="Brehm J.K."/>
            <person name="Elmore M.J."/>
            <person name="Hudson M.J."/>
            <person name="Forsman M."/>
            <person name="Isherwood K.E."/>
            <person name="Gurycova D."/>
            <person name="Minton N.P."/>
            <person name="Titball R.W."/>
            <person name="Pallen M.J."/>
            <person name="Vipond R."/>
        </authorList>
    </citation>
    <scope>NUCLEOTIDE SEQUENCE [LARGE SCALE GENOMIC DNA]</scope>
    <source>
        <strain>FSC 198</strain>
    </source>
</reference>
<name>RL27_FRAT1</name>
<dbReference type="EMBL" id="AM286280">
    <property type="protein sequence ID" value="CAL08789.1"/>
    <property type="molecule type" value="Genomic_DNA"/>
</dbReference>
<dbReference type="RefSeq" id="WP_003020646.1">
    <property type="nucleotide sequence ID" value="NC_008245.1"/>
</dbReference>
<dbReference type="SMR" id="Q14I63"/>
<dbReference type="GeneID" id="75263827"/>
<dbReference type="KEGG" id="ftf:FTF0773"/>
<dbReference type="HOGENOM" id="CLU_095424_4_1_6"/>
<dbReference type="GO" id="GO:0022625">
    <property type="term" value="C:cytosolic large ribosomal subunit"/>
    <property type="evidence" value="ECO:0007669"/>
    <property type="project" value="TreeGrafter"/>
</dbReference>
<dbReference type="GO" id="GO:0003735">
    <property type="term" value="F:structural constituent of ribosome"/>
    <property type="evidence" value="ECO:0007669"/>
    <property type="project" value="InterPro"/>
</dbReference>
<dbReference type="GO" id="GO:0006412">
    <property type="term" value="P:translation"/>
    <property type="evidence" value="ECO:0007669"/>
    <property type="project" value="UniProtKB-UniRule"/>
</dbReference>
<dbReference type="FunFam" id="2.40.50.100:FF:000001">
    <property type="entry name" value="50S ribosomal protein L27"/>
    <property type="match status" value="1"/>
</dbReference>
<dbReference type="Gene3D" id="2.40.50.100">
    <property type="match status" value="1"/>
</dbReference>
<dbReference type="HAMAP" id="MF_00539">
    <property type="entry name" value="Ribosomal_bL27"/>
    <property type="match status" value="1"/>
</dbReference>
<dbReference type="InterPro" id="IPR001684">
    <property type="entry name" value="Ribosomal_bL27"/>
</dbReference>
<dbReference type="InterPro" id="IPR018261">
    <property type="entry name" value="Ribosomal_bL27_CS"/>
</dbReference>
<dbReference type="NCBIfam" id="TIGR00062">
    <property type="entry name" value="L27"/>
    <property type="match status" value="1"/>
</dbReference>
<dbReference type="PANTHER" id="PTHR15893:SF0">
    <property type="entry name" value="LARGE RIBOSOMAL SUBUNIT PROTEIN BL27M"/>
    <property type="match status" value="1"/>
</dbReference>
<dbReference type="PANTHER" id="PTHR15893">
    <property type="entry name" value="RIBOSOMAL PROTEIN L27"/>
    <property type="match status" value="1"/>
</dbReference>
<dbReference type="Pfam" id="PF01016">
    <property type="entry name" value="Ribosomal_L27"/>
    <property type="match status" value="1"/>
</dbReference>
<dbReference type="PRINTS" id="PR00063">
    <property type="entry name" value="RIBOSOMALL27"/>
</dbReference>
<dbReference type="SUPFAM" id="SSF110324">
    <property type="entry name" value="Ribosomal L27 protein-like"/>
    <property type="match status" value="1"/>
</dbReference>
<dbReference type="PROSITE" id="PS00831">
    <property type="entry name" value="RIBOSOMAL_L27"/>
    <property type="match status" value="1"/>
</dbReference>
<gene>
    <name evidence="1" type="primary">rpmA</name>
    <name type="ordered locus">FTF0773</name>
</gene>
<comment type="similarity">
    <text evidence="1">Belongs to the bacterial ribosomal protein bL27 family.</text>
</comment>
<protein>
    <recommendedName>
        <fullName evidence="1">Large ribosomal subunit protein bL27</fullName>
    </recommendedName>
    <alternativeName>
        <fullName evidence="3">50S ribosomal protein L27</fullName>
    </alternativeName>
</protein>
<accession>Q14I63</accession>
<keyword id="KW-0687">Ribonucleoprotein</keyword>
<keyword id="KW-0689">Ribosomal protein</keyword>
<organism>
    <name type="scientific">Francisella tularensis subsp. tularensis (strain FSC 198)</name>
    <dbReference type="NCBI Taxonomy" id="393115"/>
    <lineage>
        <taxon>Bacteria</taxon>
        <taxon>Pseudomonadati</taxon>
        <taxon>Pseudomonadota</taxon>
        <taxon>Gammaproteobacteria</taxon>
        <taxon>Thiotrichales</taxon>
        <taxon>Francisellaceae</taxon>
        <taxon>Francisella</taxon>
    </lineage>
</organism>
<evidence type="ECO:0000255" key="1">
    <source>
        <dbReference type="HAMAP-Rule" id="MF_00539"/>
    </source>
</evidence>
<evidence type="ECO:0000256" key="2">
    <source>
        <dbReference type="SAM" id="MobiDB-lite"/>
    </source>
</evidence>
<evidence type="ECO:0000305" key="3"/>
<sequence>MAHKKAGGSTRNGRDSNPKYLGVKRYGGEFVKAGTIIIRQRGTKTHPGVNVGCGKDHTLFALKDGTVKFHTGGALNRKFVSIEE</sequence>
<proteinExistence type="inferred from homology"/>
<feature type="chain" id="PRO_1000017481" description="Large ribosomal subunit protein bL27">
    <location>
        <begin position="1"/>
        <end position="84"/>
    </location>
</feature>
<feature type="region of interest" description="Disordered" evidence="2">
    <location>
        <begin position="1"/>
        <end position="20"/>
    </location>
</feature>